<feature type="chain" id="PRO_0000307463" description="Triosephosphate isomerase">
    <location>
        <begin position="1"/>
        <end position="255"/>
    </location>
</feature>
<feature type="active site" description="Electrophile" evidence="1">
    <location>
        <position position="95"/>
    </location>
</feature>
<feature type="active site" description="Proton acceptor" evidence="1">
    <location>
        <position position="167"/>
    </location>
</feature>
<feature type="binding site" evidence="1">
    <location>
        <begin position="9"/>
        <end position="11"/>
    </location>
    <ligand>
        <name>substrate</name>
    </ligand>
</feature>
<feature type="binding site" evidence="1">
    <location>
        <position position="173"/>
    </location>
    <ligand>
        <name>substrate</name>
    </ligand>
</feature>
<feature type="binding site" evidence="1">
    <location>
        <position position="212"/>
    </location>
    <ligand>
        <name>substrate</name>
    </ligand>
</feature>
<feature type="binding site" evidence="1">
    <location>
        <begin position="233"/>
        <end position="234"/>
    </location>
    <ligand>
        <name>substrate</name>
    </ligand>
</feature>
<sequence length="255" mass="26972">MRHPLVMGNWKLNGSRHMVHELVSNLRKELAGVAGCAVAIAPPEMYIDMAKREAEGSHIMLGAQNVDLNLSGAFTGETSAAMLKDIGAQYIIIGHSERRTYHKESDELIAKKFAVLKEQGLTPVLCIGETEAENEAGKTEEVCARQIDAVLKTQGAAAFEGAVIAYEPVWAIGTGKSATPAQAQAVHKFIRDHIAKVDANIAEQVIIQYGGSVNASNAAELFAQPDIDGALVGGASLKADAFAVIVKAAEAAKQA</sequence>
<evidence type="ECO:0000255" key="1">
    <source>
        <dbReference type="HAMAP-Rule" id="MF_00147"/>
    </source>
</evidence>
<comment type="function">
    <text evidence="1">Involved in the gluconeogenesis. Catalyzes stereospecifically the conversion of dihydroxyacetone phosphate (DHAP) to D-glyceraldehyde-3-phosphate (G3P).</text>
</comment>
<comment type="catalytic activity">
    <reaction evidence="1">
        <text>D-glyceraldehyde 3-phosphate = dihydroxyacetone phosphate</text>
        <dbReference type="Rhea" id="RHEA:18585"/>
        <dbReference type="ChEBI" id="CHEBI:57642"/>
        <dbReference type="ChEBI" id="CHEBI:59776"/>
        <dbReference type="EC" id="5.3.1.1"/>
    </reaction>
</comment>
<comment type="pathway">
    <text evidence="1">Carbohydrate biosynthesis; gluconeogenesis.</text>
</comment>
<comment type="pathway">
    <text evidence="1">Carbohydrate degradation; glycolysis; D-glyceraldehyde 3-phosphate from glycerone phosphate: step 1/1.</text>
</comment>
<comment type="subunit">
    <text evidence="1">Homodimer.</text>
</comment>
<comment type="subcellular location">
    <subcellularLocation>
        <location evidence="1">Cytoplasm</location>
    </subcellularLocation>
</comment>
<comment type="similarity">
    <text evidence="1">Belongs to the triosephosphate isomerase family.</text>
</comment>
<reference key="1">
    <citation type="journal article" date="2007" name="J. Bacteriol.">
        <title>The genome sequence of avian pathogenic Escherichia coli strain O1:K1:H7 shares strong similarities with human extraintestinal pathogenic E. coli genomes.</title>
        <authorList>
            <person name="Johnson T.J."/>
            <person name="Kariyawasam S."/>
            <person name="Wannemuehler Y."/>
            <person name="Mangiamele P."/>
            <person name="Johnson S.J."/>
            <person name="Doetkott C."/>
            <person name="Skyberg J.A."/>
            <person name="Lynne A.M."/>
            <person name="Johnson J.R."/>
            <person name="Nolan L.K."/>
        </authorList>
    </citation>
    <scope>NUCLEOTIDE SEQUENCE [LARGE SCALE GENOMIC DNA]</scope>
</reference>
<protein>
    <recommendedName>
        <fullName evidence="1">Triosephosphate isomerase</fullName>
        <shortName evidence="1">TIM</shortName>
        <shortName evidence="1">TPI</shortName>
        <ecNumber evidence="1">5.3.1.1</ecNumber>
    </recommendedName>
    <alternativeName>
        <fullName evidence="1">Triose-phosphate isomerase</fullName>
    </alternativeName>
</protein>
<accession>A1AI95</accession>
<gene>
    <name evidence="1" type="primary">tpiA</name>
    <name type="ordered locus">Ecok1_38910</name>
    <name type="ORF">APECO1_2550</name>
</gene>
<dbReference type="EC" id="5.3.1.1" evidence="1"/>
<dbReference type="EMBL" id="CP000468">
    <property type="protein sequence ID" value="ABJ03385.1"/>
    <property type="molecule type" value="Genomic_DNA"/>
</dbReference>
<dbReference type="RefSeq" id="WP_001216325.1">
    <property type="nucleotide sequence ID" value="NZ_CADILS010000014.1"/>
</dbReference>
<dbReference type="SMR" id="A1AI95"/>
<dbReference type="GeneID" id="93777979"/>
<dbReference type="KEGG" id="ecv:APECO1_2550"/>
<dbReference type="HOGENOM" id="CLU_024251_2_1_6"/>
<dbReference type="UniPathway" id="UPA00109">
    <property type="reaction ID" value="UER00189"/>
</dbReference>
<dbReference type="UniPathway" id="UPA00138"/>
<dbReference type="Proteomes" id="UP000008216">
    <property type="component" value="Chromosome"/>
</dbReference>
<dbReference type="GO" id="GO:0005829">
    <property type="term" value="C:cytosol"/>
    <property type="evidence" value="ECO:0007669"/>
    <property type="project" value="TreeGrafter"/>
</dbReference>
<dbReference type="GO" id="GO:0004807">
    <property type="term" value="F:triose-phosphate isomerase activity"/>
    <property type="evidence" value="ECO:0007669"/>
    <property type="project" value="UniProtKB-UniRule"/>
</dbReference>
<dbReference type="GO" id="GO:0006094">
    <property type="term" value="P:gluconeogenesis"/>
    <property type="evidence" value="ECO:0007669"/>
    <property type="project" value="UniProtKB-UniRule"/>
</dbReference>
<dbReference type="GO" id="GO:0046166">
    <property type="term" value="P:glyceraldehyde-3-phosphate biosynthetic process"/>
    <property type="evidence" value="ECO:0007669"/>
    <property type="project" value="TreeGrafter"/>
</dbReference>
<dbReference type="GO" id="GO:0019563">
    <property type="term" value="P:glycerol catabolic process"/>
    <property type="evidence" value="ECO:0007669"/>
    <property type="project" value="TreeGrafter"/>
</dbReference>
<dbReference type="GO" id="GO:0006096">
    <property type="term" value="P:glycolytic process"/>
    <property type="evidence" value="ECO:0007669"/>
    <property type="project" value="UniProtKB-UniRule"/>
</dbReference>
<dbReference type="CDD" id="cd00311">
    <property type="entry name" value="TIM"/>
    <property type="match status" value="1"/>
</dbReference>
<dbReference type="FunFam" id="3.20.20.70:FF:000020">
    <property type="entry name" value="Triosephosphate isomerase"/>
    <property type="match status" value="1"/>
</dbReference>
<dbReference type="Gene3D" id="3.20.20.70">
    <property type="entry name" value="Aldolase class I"/>
    <property type="match status" value="1"/>
</dbReference>
<dbReference type="HAMAP" id="MF_00147_B">
    <property type="entry name" value="TIM_B"/>
    <property type="match status" value="1"/>
</dbReference>
<dbReference type="InterPro" id="IPR013785">
    <property type="entry name" value="Aldolase_TIM"/>
</dbReference>
<dbReference type="InterPro" id="IPR035990">
    <property type="entry name" value="TIM_sf"/>
</dbReference>
<dbReference type="InterPro" id="IPR022896">
    <property type="entry name" value="TrioseP_Isoase_bac/euk"/>
</dbReference>
<dbReference type="InterPro" id="IPR000652">
    <property type="entry name" value="Triosephosphate_isomerase"/>
</dbReference>
<dbReference type="InterPro" id="IPR020861">
    <property type="entry name" value="Triosephosphate_isomerase_AS"/>
</dbReference>
<dbReference type="NCBIfam" id="TIGR00419">
    <property type="entry name" value="tim"/>
    <property type="match status" value="1"/>
</dbReference>
<dbReference type="PANTHER" id="PTHR21139">
    <property type="entry name" value="TRIOSEPHOSPHATE ISOMERASE"/>
    <property type="match status" value="1"/>
</dbReference>
<dbReference type="PANTHER" id="PTHR21139:SF42">
    <property type="entry name" value="TRIOSEPHOSPHATE ISOMERASE"/>
    <property type="match status" value="1"/>
</dbReference>
<dbReference type="Pfam" id="PF00121">
    <property type="entry name" value="TIM"/>
    <property type="match status" value="1"/>
</dbReference>
<dbReference type="SUPFAM" id="SSF51351">
    <property type="entry name" value="Triosephosphate isomerase (TIM)"/>
    <property type="match status" value="1"/>
</dbReference>
<dbReference type="PROSITE" id="PS00171">
    <property type="entry name" value="TIM_1"/>
    <property type="match status" value="1"/>
</dbReference>
<dbReference type="PROSITE" id="PS51440">
    <property type="entry name" value="TIM_2"/>
    <property type="match status" value="1"/>
</dbReference>
<organism>
    <name type="scientific">Escherichia coli O1:K1 / APEC</name>
    <dbReference type="NCBI Taxonomy" id="405955"/>
    <lineage>
        <taxon>Bacteria</taxon>
        <taxon>Pseudomonadati</taxon>
        <taxon>Pseudomonadota</taxon>
        <taxon>Gammaproteobacteria</taxon>
        <taxon>Enterobacterales</taxon>
        <taxon>Enterobacteriaceae</taxon>
        <taxon>Escherichia</taxon>
    </lineage>
</organism>
<proteinExistence type="inferred from homology"/>
<keyword id="KW-0963">Cytoplasm</keyword>
<keyword id="KW-0312">Gluconeogenesis</keyword>
<keyword id="KW-0324">Glycolysis</keyword>
<keyword id="KW-0413">Isomerase</keyword>
<keyword id="KW-1185">Reference proteome</keyword>
<name>TPIS_ECOK1</name>